<name>ATPD_STAA1</name>
<dbReference type="EMBL" id="AP009324">
    <property type="protein sequence ID" value="BAF78973.1"/>
    <property type="molecule type" value="Genomic_DNA"/>
</dbReference>
<dbReference type="RefSeq" id="WP_000241344.1">
    <property type="nucleotide sequence ID" value="NC_009782.1"/>
</dbReference>
<dbReference type="SMR" id="A7X4U8"/>
<dbReference type="KEGG" id="saw:SAHV_2090"/>
<dbReference type="HOGENOM" id="CLU_085114_4_1_9"/>
<dbReference type="GO" id="GO:0005886">
    <property type="term" value="C:plasma membrane"/>
    <property type="evidence" value="ECO:0007669"/>
    <property type="project" value="UniProtKB-SubCell"/>
</dbReference>
<dbReference type="GO" id="GO:0045259">
    <property type="term" value="C:proton-transporting ATP synthase complex"/>
    <property type="evidence" value="ECO:0007669"/>
    <property type="project" value="UniProtKB-KW"/>
</dbReference>
<dbReference type="GO" id="GO:0046933">
    <property type="term" value="F:proton-transporting ATP synthase activity, rotational mechanism"/>
    <property type="evidence" value="ECO:0007669"/>
    <property type="project" value="UniProtKB-UniRule"/>
</dbReference>
<dbReference type="Gene3D" id="1.10.520.20">
    <property type="entry name" value="N-terminal domain of the delta subunit of the F1F0-ATP synthase"/>
    <property type="match status" value="1"/>
</dbReference>
<dbReference type="HAMAP" id="MF_01416">
    <property type="entry name" value="ATP_synth_delta_bact"/>
    <property type="match status" value="1"/>
</dbReference>
<dbReference type="InterPro" id="IPR026015">
    <property type="entry name" value="ATP_synth_OSCP/delta_N_sf"/>
</dbReference>
<dbReference type="InterPro" id="IPR020781">
    <property type="entry name" value="ATPase_OSCP/d_CS"/>
</dbReference>
<dbReference type="InterPro" id="IPR000711">
    <property type="entry name" value="ATPase_OSCP/dsu"/>
</dbReference>
<dbReference type="NCBIfam" id="TIGR01145">
    <property type="entry name" value="ATP_synt_delta"/>
    <property type="match status" value="1"/>
</dbReference>
<dbReference type="NCBIfam" id="NF004399">
    <property type="entry name" value="PRK05758.1-1"/>
    <property type="match status" value="1"/>
</dbReference>
<dbReference type="PANTHER" id="PTHR11910">
    <property type="entry name" value="ATP SYNTHASE DELTA CHAIN"/>
    <property type="match status" value="1"/>
</dbReference>
<dbReference type="Pfam" id="PF00213">
    <property type="entry name" value="OSCP"/>
    <property type="match status" value="1"/>
</dbReference>
<dbReference type="PRINTS" id="PR00125">
    <property type="entry name" value="ATPASEDELTA"/>
</dbReference>
<dbReference type="SUPFAM" id="SSF47928">
    <property type="entry name" value="N-terminal domain of the delta subunit of the F1F0-ATP synthase"/>
    <property type="match status" value="1"/>
</dbReference>
<dbReference type="PROSITE" id="PS00389">
    <property type="entry name" value="ATPASE_DELTA"/>
    <property type="match status" value="1"/>
</dbReference>
<proteinExistence type="inferred from homology"/>
<reference key="1">
    <citation type="journal article" date="2008" name="Antimicrob. Agents Chemother.">
        <title>Mutated response regulator graR is responsible for phenotypic conversion of Staphylococcus aureus from heterogeneous vancomycin-intermediate resistance to vancomycin-intermediate resistance.</title>
        <authorList>
            <person name="Neoh H.-M."/>
            <person name="Cui L."/>
            <person name="Yuzawa H."/>
            <person name="Takeuchi F."/>
            <person name="Matsuo M."/>
            <person name="Hiramatsu K."/>
        </authorList>
    </citation>
    <scope>NUCLEOTIDE SEQUENCE [LARGE SCALE GENOMIC DNA]</scope>
    <source>
        <strain>Mu3 / ATCC 700698</strain>
    </source>
</reference>
<organism>
    <name type="scientific">Staphylococcus aureus (strain Mu3 / ATCC 700698)</name>
    <dbReference type="NCBI Taxonomy" id="418127"/>
    <lineage>
        <taxon>Bacteria</taxon>
        <taxon>Bacillati</taxon>
        <taxon>Bacillota</taxon>
        <taxon>Bacilli</taxon>
        <taxon>Bacillales</taxon>
        <taxon>Staphylococcaceae</taxon>
        <taxon>Staphylococcus</taxon>
    </lineage>
</organism>
<evidence type="ECO:0000255" key="1">
    <source>
        <dbReference type="HAMAP-Rule" id="MF_01416"/>
    </source>
</evidence>
<comment type="function">
    <text evidence="1">F(1)F(0) ATP synthase produces ATP from ADP in the presence of a proton or sodium gradient. F-type ATPases consist of two structural domains, F(1) containing the extramembraneous catalytic core and F(0) containing the membrane proton channel, linked together by a central stalk and a peripheral stalk. During catalysis, ATP synthesis in the catalytic domain of F(1) is coupled via a rotary mechanism of the central stalk subunits to proton translocation.</text>
</comment>
<comment type="function">
    <text evidence="1">This protein is part of the stalk that links CF(0) to CF(1). It either transmits conformational changes from CF(0) to CF(1) or is implicated in proton conduction.</text>
</comment>
<comment type="subunit">
    <text evidence="1">F-type ATPases have 2 components, F(1) - the catalytic core - and F(0) - the membrane proton channel. F(1) has five subunits: alpha(3), beta(3), gamma(1), delta(1), epsilon(1). F(0) has three main subunits: a(1), b(2) and c(10-14). The alpha and beta chains form an alternating ring which encloses part of the gamma chain. F(1) is attached to F(0) by a central stalk formed by the gamma and epsilon chains, while a peripheral stalk is formed by the delta and b chains.</text>
</comment>
<comment type="subcellular location">
    <subcellularLocation>
        <location evidence="1">Cell membrane</location>
        <topology evidence="1">Peripheral membrane protein</topology>
    </subcellularLocation>
</comment>
<comment type="similarity">
    <text evidence="1">Belongs to the ATPase delta chain family.</text>
</comment>
<protein>
    <recommendedName>
        <fullName evidence="1">ATP synthase subunit delta</fullName>
    </recommendedName>
    <alternativeName>
        <fullName evidence="1">ATP synthase F(1) sector subunit delta</fullName>
    </alternativeName>
    <alternativeName>
        <fullName evidence="1">F-type ATPase subunit delta</fullName>
        <shortName evidence="1">F-ATPase subunit delta</shortName>
    </alternativeName>
</protein>
<accession>A7X4U8</accession>
<sequence>MVKVANKYAKALFDVSLDTNNLETINEELTVINEAVKDKIEQLKMVDSNPTQTAEQRRELINGVFTDINPYIKNMMYVLADNRHISLIADVFKAFQSLYNGHYNQDFATIESTYELSQEELDKIVKLVTQQTKLSKVIVDTKINPDLIGGFRVKVGTTVLDGSVRNDLVQLQRKFRRVN</sequence>
<keyword id="KW-0066">ATP synthesis</keyword>
<keyword id="KW-1003">Cell membrane</keyword>
<keyword id="KW-0139">CF(1)</keyword>
<keyword id="KW-0375">Hydrogen ion transport</keyword>
<keyword id="KW-0406">Ion transport</keyword>
<keyword id="KW-0472">Membrane</keyword>
<keyword id="KW-0813">Transport</keyword>
<gene>
    <name evidence="1" type="primary">atpH</name>
    <name type="ordered locus">SAHV_2090</name>
</gene>
<feature type="chain" id="PRO_1000184796" description="ATP synthase subunit delta">
    <location>
        <begin position="1"/>
        <end position="179"/>
    </location>
</feature>